<organism>
    <name type="scientific">Anaplasma marginale (strain St. Maries)</name>
    <dbReference type="NCBI Taxonomy" id="234826"/>
    <lineage>
        <taxon>Bacteria</taxon>
        <taxon>Pseudomonadati</taxon>
        <taxon>Pseudomonadota</taxon>
        <taxon>Alphaproteobacteria</taxon>
        <taxon>Rickettsiales</taxon>
        <taxon>Anaplasmataceae</taxon>
        <taxon>Anaplasma</taxon>
    </lineage>
</organism>
<protein>
    <recommendedName>
        <fullName evidence="1">Elongation factor 4</fullName>
        <shortName evidence="1">EF-4</shortName>
        <ecNumber evidence="1">3.6.5.n1</ecNumber>
    </recommendedName>
    <alternativeName>
        <fullName evidence="1">Ribosomal back-translocase LepA</fullName>
    </alternativeName>
</protein>
<name>LEPA_ANAMM</name>
<accession>Q5PAX8</accession>
<evidence type="ECO:0000255" key="1">
    <source>
        <dbReference type="HAMAP-Rule" id="MF_00071"/>
    </source>
</evidence>
<dbReference type="EC" id="3.6.5.n1" evidence="1"/>
<dbReference type="EMBL" id="CP000030">
    <property type="protein sequence ID" value="AAV86552.1"/>
    <property type="molecule type" value="Genomic_DNA"/>
</dbReference>
<dbReference type="SMR" id="Q5PAX8"/>
<dbReference type="KEGG" id="ama:AM528"/>
<dbReference type="HOGENOM" id="CLU_009995_3_3_5"/>
<dbReference type="GO" id="GO:0005886">
    <property type="term" value="C:plasma membrane"/>
    <property type="evidence" value="ECO:0007669"/>
    <property type="project" value="UniProtKB-SubCell"/>
</dbReference>
<dbReference type="GO" id="GO:0005525">
    <property type="term" value="F:GTP binding"/>
    <property type="evidence" value="ECO:0007669"/>
    <property type="project" value="UniProtKB-UniRule"/>
</dbReference>
<dbReference type="GO" id="GO:0003924">
    <property type="term" value="F:GTPase activity"/>
    <property type="evidence" value="ECO:0007669"/>
    <property type="project" value="UniProtKB-UniRule"/>
</dbReference>
<dbReference type="GO" id="GO:0097216">
    <property type="term" value="F:guanosine tetraphosphate binding"/>
    <property type="evidence" value="ECO:0007669"/>
    <property type="project" value="UniProtKB-ARBA"/>
</dbReference>
<dbReference type="GO" id="GO:0043022">
    <property type="term" value="F:ribosome binding"/>
    <property type="evidence" value="ECO:0007669"/>
    <property type="project" value="UniProtKB-UniRule"/>
</dbReference>
<dbReference type="GO" id="GO:0003746">
    <property type="term" value="F:translation elongation factor activity"/>
    <property type="evidence" value="ECO:0007669"/>
    <property type="project" value="UniProtKB-UniRule"/>
</dbReference>
<dbReference type="GO" id="GO:0045727">
    <property type="term" value="P:positive regulation of translation"/>
    <property type="evidence" value="ECO:0007669"/>
    <property type="project" value="UniProtKB-UniRule"/>
</dbReference>
<dbReference type="CDD" id="cd03699">
    <property type="entry name" value="EF4_II"/>
    <property type="match status" value="1"/>
</dbReference>
<dbReference type="CDD" id="cd16260">
    <property type="entry name" value="EF4_III"/>
    <property type="match status" value="1"/>
</dbReference>
<dbReference type="CDD" id="cd01890">
    <property type="entry name" value="LepA"/>
    <property type="match status" value="1"/>
</dbReference>
<dbReference type="CDD" id="cd03709">
    <property type="entry name" value="lepA_C"/>
    <property type="match status" value="1"/>
</dbReference>
<dbReference type="FunFam" id="3.40.50.300:FF:000078">
    <property type="entry name" value="Elongation factor 4"/>
    <property type="match status" value="1"/>
</dbReference>
<dbReference type="FunFam" id="2.40.30.10:FF:000015">
    <property type="entry name" value="Translation factor GUF1, mitochondrial"/>
    <property type="match status" value="1"/>
</dbReference>
<dbReference type="FunFam" id="3.30.70.240:FF:000007">
    <property type="entry name" value="Translation factor GUF1, mitochondrial"/>
    <property type="match status" value="1"/>
</dbReference>
<dbReference type="FunFam" id="3.30.70.2570:FF:000001">
    <property type="entry name" value="Translation factor GUF1, mitochondrial"/>
    <property type="match status" value="1"/>
</dbReference>
<dbReference type="FunFam" id="3.30.70.870:FF:000004">
    <property type="entry name" value="Translation factor GUF1, mitochondrial"/>
    <property type="match status" value="1"/>
</dbReference>
<dbReference type="Gene3D" id="3.30.70.240">
    <property type="match status" value="1"/>
</dbReference>
<dbReference type="Gene3D" id="3.30.70.2570">
    <property type="entry name" value="Elongation factor 4, C-terminal domain"/>
    <property type="match status" value="1"/>
</dbReference>
<dbReference type="Gene3D" id="3.30.70.870">
    <property type="entry name" value="Elongation Factor G (Translational Gtpase), domain 3"/>
    <property type="match status" value="1"/>
</dbReference>
<dbReference type="Gene3D" id="3.40.50.300">
    <property type="entry name" value="P-loop containing nucleotide triphosphate hydrolases"/>
    <property type="match status" value="1"/>
</dbReference>
<dbReference type="Gene3D" id="2.40.30.10">
    <property type="entry name" value="Translation factors"/>
    <property type="match status" value="1"/>
</dbReference>
<dbReference type="HAMAP" id="MF_00071">
    <property type="entry name" value="LepA"/>
    <property type="match status" value="1"/>
</dbReference>
<dbReference type="InterPro" id="IPR006297">
    <property type="entry name" value="EF-4"/>
</dbReference>
<dbReference type="InterPro" id="IPR041095">
    <property type="entry name" value="EFG_II"/>
</dbReference>
<dbReference type="InterPro" id="IPR035647">
    <property type="entry name" value="EFG_III/V"/>
</dbReference>
<dbReference type="InterPro" id="IPR000640">
    <property type="entry name" value="EFG_V-like"/>
</dbReference>
<dbReference type="InterPro" id="IPR004161">
    <property type="entry name" value="EFTu-like_2"/>
</dbReference>
<dbReference type="InterPro" id="IPR031157">
    <property type="entry name" value="G_TR_CS"/>
</dbReference>
<dbReference type="InterPro" id="IPR038363">
    <property type="entry name" value="LepA_C_sf"/>
</dbReference>
<dbReference type="InterPro" id="IPR013842">
    <property type="entry name" value="LepA_CTD"/>
</dbReference>
<dbReference type="InterPro" id="IPR035654">
    <property type="entry name" value="LepA_IV"/>
</dbReference>
<dbReference type="InterPro" id="IPR027417">
    <property type="entry name" value="P-loop_NTPase"/>
</dbReference>
<dbReference type="InterPro" id="IPR005225">
    <property type="entry name" value="Small_GTP-bd"/>
</dbReference>
<dbReference type="InterPro" id="IPR000795">
    <property type="entry name" value="T_Tr_GTP-bd_dom"/>
</dbReference>
<dbReference type="NCBIfam" id="TIGR01393">
    <property type="entry name" value="lepA"/>
    <property type="match status" value="1"/>
</dbReference>
<dbReference type="NCBIfam" id="TIGR00231">
    <property type="entry name" value="small_GTP"/>
    <property type="match status" value="1"/>
</dbReference>
<dbReference type="PANTHER" id="PTHR43512:SF4">
    <property type="entry name" value="TRANSLATION FACTOR GUF1 HOMOLOG, CHLOROPLASTIC"/>
    <property type="match status" value="1"/>
</dbReference>
<dbReference type="PANTHER" id="PTHR43512">
    <property type="entry name" value="TRANSLATION FACTOR GUF1-RELATED"/>
    <property type="match status" value="1"/>
</dbReference>
<dbReference type="Pfam" id="PF00679">
    <property type="entry name" value="EFG_C"/>
    <property type="match status" value="1"/>
</dbReference>
<dbReference type="Pfam" id="PF14492">
    <property type="entry name" value="EFG_III"/>
    <property type="match status" value="1"/>
</dbReference>
<dbReference type="Pfam" id="PF00009">
    <property type="entry name" value="GTP_EFTU"/>
    <property type="match status" value="1"/>
</dbReference>
<dbReference type="Pfam" id="PF03144">
    <property type="entry name" value="GTP_EFTU_D2"/>
    <property type="match status" value="1"/>
</dbReference>
<dbReference type="Pfam" id="PF06421">
    <property type="entry name" value="LepA_C"/>
    <property type="match status" value="1"/>
</dbReference>
<dbReference type="PRINTS" id="PR00315">
    <property type="entry name" value="ELONGATNFCT"/>
</dbReference>
<dbReference type="SMART" id="SM00838">
    <property type="entry name" value="EFG_C"/>
    <property type="match status" value="1"/>
</dbReference>
<dbReference type="SUPFAM" id="SSF54980">
    <property type="entry name" value="EF-G C-terminal domain-like"/>
    <property type="match status" value="2"/>
</dbReference>
<dbReference type="SUPFAM" id="SSF52540">
    <property type="entry name" value="P-loop containing nucleoside triphosphate hydrolases"/>
    <property type="match status" value="1"/>
</dbReference>
<dbReference type="PROSITE" id="PS00301">
    <property type="entry name" value="G_TR_1"/>
    <property type="match status" value="1"/>
</dbReference>
<dbReference type="PROSITE" id="PS51722">
    <property type="entry name" value="G_TR_2"/>
    <property type="match status" value="1"/>
</dbReference>
<sequence>MVGESTIRNFAIIAHIDHGKSTLADRLIEACNALSDRDMKDQVLDSMDIERERGITIKAQTVRLTYAAKDGVVYHLNLVDTPGHVDFSYEVSRSLAACEGSLLVIDSSQGVEAQTLANVYKAIENDHEIVTVLNKADLASSDPERVKSQVEEIIGLDASGALLISAKTGMGISDVLEAIVHRLPAPVGDANAPLKAILVDSWYDPYLGIVILLRVKDGVLKKGMKVAMLSTGAVYQVDNVGVFTPNKQMVDSLSVGEIGFITAGIKEIADCKVGDTLTEDSRRCDNPFPGFRATCPVVFCSLFPVDASSFEHLREALGKLQLNDSSFTFDMESSTALGYGFRCGFLGMLHLEVVQERLEREFDLDLTATAPSVVYRVTDKHRVTKEVHNPNDLPESHEILGVEEPWIAATIMVPDQYLGSILALCNSKRGEKVDLSYTGSMALLKYRLPLAEVVFDFYDSLKSVSKGYASLDWYVDGYVPTEISKLTILINSEPVDALSCIIHKSKVESRGREICERLKDLIPRQQYKVAIQAAVGAKIVARETISPYRKDVTAKVYGRDVTRKMKLLEKQKKGKKRLRSIGNVNVPQSAFIQALKMKD</sequence>
<comment type="function">
    <text evidence="1">Required for accurate and efficient protein synthesis under certain stress conditions. May act as a fidelity factor of the translation reaction, by catalyzing a one-codon backward translocation of tRNAs on improperly translocated ribosomes. Back-translocation proceeds from a post-translocation (POST) complex to a pre-translocation (PRE) complex, thus giving elongation factor G a second chance to translocate the tRNAs correctly. Binds to ribosomes in a GTP-dependent manner.</text>
</comment>
<comment type="catalytic activity">
    <reaction evidence="1">
        <text>GTP + H2O = GDP + phosphate + H(+)</text>
        <dbReference type="Rhea" id="RHEA:19669"/>
        <dbReference type="ChEBI" id="CHEBI:15377"/>
        <dbReference type="ChEBI" id="CHEBI:15378"/>
        <dbReference type="ChEBI" id="CHEBI:37565"/>
        <dbReference type="ChEBI" id="CHEBI:43474"/>
        <dbReference type="ChEBI" id="CHEBI:58189"/>
        <dbReference type="EC" id="3.6.5.n1"/>
    </reaction>
</comment>
<comment type="subcellular location">
    <subcellularLocation>
        <location evidence="1">Cell inner membrane</location>
        <topology evidence="1">Peripheral membrane protein</topology>
        <orientation evidence="1">Cytoplasmic side</orientation>
    </subcellularLocation>
</comment>
<comment type="similarity">
    <text evidence="1">Belongs to the TRAFAC class translation factor GTPase superfamily. Classic translation factor GTPase family. LepA subfamily.</text>
</comment>
<keyword id="KW-0997">Cell inner membrane</keyword>
<keyword id="KW-1003">Cell membrane</keyword>
<keyword id="KW-0342">GTP-binding</keyword>
<keyword id="KW-0378">Hydrolase</keyword>
<keyword id="KW-0472">Membrane</keyword>
<keyword id="KW-0547">Nucleotide-binding</keyword>
<keyword id="KW-0648">Protein biosynthesis</keyword>
<reference key="1">
    <citation type="journal article" date="2005" name="Proc. Natl. Acad. Sci. U.S.A.">
        <title>Complete genome sequencing of Anaplasma marginale reveals that the surface is skewed to two superfamilies of outer membrane proteins.</title>
        <authorList>
            <person name="Brayton K.A."/>
            <person name="Kappmeyer L.S."/>
            <person name="Herndon D.R."/>
            <person name="Dark M.J."/>
            <person name="Tibbals D.L."/>
            <person name="Palmer G.H."/>
            <person name="McGuire T.C."/>
            <person name="Knowles D.P. Jr."/>
        </authorList>
    </citation>
    <scope>NUCLEOTIDE SEQUENCE [LARGE SCALE GENOMIC DNA]</scope>
    <source>
        <strain>St. Maries</strain>
    </source>
</reference>
<proteinExistence type="inferred from homology"/>
<feature type="chain" id="PRO_0000224741" description="Elongation factor 4">
    <location>
        <begin position="1"/>
        <end position="599"/>
    </location>
</feature>
<feature type="domain" description="tr-type G">
    <location>
        <begin position="5"/>
        <end position="187"/>
    </location>
</feature>
<feature type="binding site" evidence="1">
    <location>
        <begin position="17"/>
        <end position="22"/>
    </location>
    <ligand>
        <name>GTP</name>
        <dbReference type="ChEBI" id="CHEBI:37565"/>
    </ligand>
</feature>
<feature type="binding site" evidence="1">
    <location>
        <begin position="134"/>
        <end position="137"/>
    </location>
    <ligand>
        <name>GTP</name>
        <dbReference type="ChEBI" id="CHEBI:37565"/>
    </ligand>
</feature>
<gene>
    <name evidence="1" type="primary">lepA</name>
    <name type="ordered locus">AM528</name>
</gene>